<proteinExistence type="inferred from homology"/>
<reference key="1">
    <citation type="submission" date="2006-08" db="EMBL/GenBank/DDBJ databases">
        <title>Complete sequence of Alkalilimnicola ehrilichei MLHE-1.</title>
        <authorList>
            <person name="Copeland A."/>
            <person name="Lucas S."/>
            <person name="Lapidus A."/>
            <person name="Barry K."/>
            <person name="Detter J.C."/>
            <person name="Glavina del Rio T."/>
            <person name="Hammon N."/>
            <person name="Israni S."/>
            <person name="Dalin E."/>
            <person name="Tice H."/>
            <person name="Pitluck S."/>
            <person name="Sims D."/>
            <person name="Brettin T."/>
            <person name="Bruce D."/>
            <person name="Han C."/>
            <person name="Tapia R."/>
            <person name="Gilna P."/>
            <person name="Schmutz J."/>
            <person name="Larimer F."/>
            <person name="Land M."/>
            <person name="Hauser L."/>
            <person name="Kyrpides N."/>
            <person name="Mikhailova N."/>
            <person name="Oremland R.S."/>
            <person name="Hoeft S.E."/>
            <person name="Switzer-Blum J."/>
            <person name="Kulp T."/>
            <person name="King G."/>
            <person name="Tabita R."/>
            <person name="Witte B."/>
            <person name="Santini J.M."/>
            <person name="Basu P."/>
            <person name="Hollibaugh J.T."/>
            <person name="Xie G."/>
            <person name="Stolz J.F."/>
            <person name="Richardson P."/>
        </authorList>
    </citation>
    <scope>NUCLEOTIDE SEQUENCE [LARGE SCALE GENOMIC DNA]</scope>
    <source>
        <strain>ATCC BAA-1101 / DSM 17681 / MLHE-1</strain>
    </source>
</reference>
<sequence length="236" mass="25418">MGDTALHLVAAPALEATGLQVARGGRPLFRGLGFRLARGGLLCVRGANGSGKTTLLRTLAGLSRPHRGRILRAGRCIRQAANDHRGTLQYRGHRDGLRGALTVLENLQWQAALYHHRPDREAVRTALAGMGMARHLDTLASQLSQGQRRRVVLASLALFPRCRLWLLDEPQAALDVEGAERFHALLARHCQEGGAVVACSHQHLRIGGIPCDELWLSDPAPAGARSAGDRVTGTEA</sequence>
<gene>
    <name evidence="1" type="primary">ccmA</name>
    <name type="ordered locus">Mlg_1683</name>
</gene>
<organism>
    <name type="scientific">Alkalilimnicola ehrlichii (strain ATCC BAA-1101 / DSM 17681 / MLHE-1)</name>
    <dbReference type="NCBI Taxonomy" id="187272"/>
    <lineage>
        <taxon>Bacteria</taxon>
        <taxon>Pseudomonadati</taxon>
        <taxon>Pseudomonadota</taxon>
        <taxon>Gammaproteobacteria</taxon>
        <taxon>Chromatiales</taxon>
        <taxon>Ectothiorhodospiraceae</taxon>
        <taxon>Alkalilimnicola</taxon>
    </lineage>
</organism>
<comment type="function">
    <text evidence="1">Part of the ABC transporter complex CcmAB involved in the biogenesis of c-type cytochromes; once thought to export heme, this seems not to be the case, but its exact role is uncertain. Responsible for energy coupling to the transport system.</text>
</comment>
<comment type="catalytic activity">
    <reaction evidence="1">
        <text>heme b(in) + ATP + H2O = heme b(out) + ADP + phosphate + H(+)</text>
        <dbReference type="Rhea" id="RHEA:19261"/>
        <dbReference type="ChEBI" id="CHEBI:15377"/>
        <dbReference type="ChEBI" id="CHEBI:15378"/>
        <dbReference type="ChEBI" id="CHEBI:30616"/>
        <dbReference type="ChEBI" id="CHEBI:43474"/>
        <dbReference type="ChEBI" id="CHEBI:60344"/>
        <dbReference type="ChEBI" id="CHEBI:456216"/>
        <dbReference type="EC" id="7.6.2.5"/>
    </reaction>
</comment>
<comment type="subunit">
    <text evidence="1">The complex is composed of two ATP-binding proteins (CcmA) and two transmembrane proteins (CcmB).</text>
</comment>
<comment type="subcellular location">
    <subcellularLocation>
        <location evidence="1">Cell inner membrane</location>
        <topology evidence="1">Peripheral membrane protein</topology>
    </subcellularLocation>
</comment>
<comment type="similarity">
    <text evidence="1">Belongs to the ABC transporter superfamily. CcmA exporter (TC 3.A.1.107) family.</text>
</comment>
<evidence type="ECO:0000255" key="1">
    <source>
        <dbReference type="HAMAP-Rule" id="MF_01707"/>
    </source>
</evidence>
<accession>Q0A808</accession>
<keyword id="KW-0067">ATP-binding</keyword>
<keyword id="KW-0997">Cell inner membrane</keyword>
<keyword id="KW-1003">Cell membrane</keyword>
<keyword id="KW-0201">Cytochrome c-type biogenesis</keyword>
<keyword id="KW-0472">Membrane</keyword>
<keyword id="KW-0547">Nucleotide-binding</keyword>
<keyword id="KW-1185">Reference proteome</keyword>
<keyword id="KW-1278">Translocase</keyword>
<keyword id="KW-0813">Transport</keyword>
<feature type="chain" id="PRO_0000271918" description="Cytochrome c biogenesis ATP-binding export protein CcmA">
    <location>
        <begin position="1"/>
        <end position="236"/>
    </location>
</feature>
<feature type="domain" description="ABC transporter" evidence="1">
    <location>
        <begin position="14"/>
        <end position="235"/>
    </location>
</feature>
<feature type="binding site" evidence="1">
    <location>
        <begin position="46"/>
        <end position="53"/>
    </location>
    <ligand>
        <name>ATP</name>
        <dbReference type="ChEBI" id="CHEBI:30616"/>
    </ligand>
</feature>
<protein>
    <recommendedName>
        <fullName evidence="1">Cytochrome c biogenesis ATP-binding export protein CcmA</fullName>
        <ecNumber evidence="1">7.6.2.5</ecNumber>
    </recommendedName>
    <alternativeName>
        <fullName evidence="1">Heme exporter protein A</fullName>
    </alternativeName>
</protein>
<dbReference type="EC" id="7.6.2.5" evidence="1"/>
<dbReference type="EMBL" id="CP000453">
    <property type="protein sequence ID" value="ABI57029.1"/>
    <property type="molecule type" value="Genomic_DNA"/>
</dbReference>
<dbReference type="RefSeq" id="WP_011629423.1">
    <property type="nucleotide sequence ID" value="NC_008340.1"/>
</dbReference>
<dbReference type="SMR" id="Q0A808"/>
<dbReference type="KEGG" id="aeh:Mlg_1683"/>
<dbReference type="eggNOG" id="COG4133">
    <property type="taxonomic scope" value="Bacteria"/>
</dbReference>
<dbReference type="HOGENOM" id="CLU_000604_1_2_6"/>
<dbReference type="OrthoDB" id="9800654at2"/>
<dbReference type="Proteomes" id="UP000001962">
    <property type="component" value="Chromosome"/>
</dbReference>
<dbReference type="GO" id="GO:0005886">
    <property type="term" value="C:plasma membrane"/>
    <property type="evidence" value="ECO:0007669"/>
    <property type="project" value="UniProtKB-SubCell"/>
</dbReference>
<dbReference type="GO" id="GO:0015439">
    <property type="term" value="F:ABC-type heme transporter activity"/>
    <property type="evidence" value="ECO:0007669"/>
    <property type="project" value="UniProtKB-EC"/>
</dbReference>
<dbReference type="GO" id="GO:0005524">
    <property type="term" value="F:ATP binding"/>
    <property type="evidence" value="ECO:0007669"/>
    <property type="project" value="UniProtKB-KW"/>
</dbReference>
<dbReference type="GO" id="GO:0016887">
    <property type="term" value="F:ATP hydrolysis activity"/>
    <property type="evidence" value="ECO:0007669"/>
    <property type="project" value="InterPro"/>
</dbReference>
<dbReference type="GO" id="GO:0017004">
    <property type="term" value="P:cytochrome complex assembly"/>
    <property type="evidence" value="ECO:0007669"/>
    <property type="project" value="UniProtKB-KW"/>
</dbReference>
<dbReference type="Gene3D" id="3.40.50.300">
    <property type="entry name" value="P-loop containing nucleotide triphosphate hydrolases"/>
    <property type="match status" value="1"/>
</dbReference>
<dbReference type="InterPro" id="IPR003593">
    <property type="entry name" value="AAA+_ATPase"/>
</dbReference>
<dbReference type="InterPro" id="IPR003439">
    <property type="entry name" value="ABC_transporter-like_ATP-bd"/>
</dbReference>
<dbReference type="InterPro" id="IPR017871">
    <property type="entry name" value="ABC_transporter-like_CS"/>
</dbReference>
<dbReference type="InterPro" id="IPR005895">
    <property type="entry name" value="ABC_transptr_haem_export_CcmA"/>
</dbReference>
<dbReference type="InterPro" id="IPR027417">
    <property type="entry name" value="P-loop_NTPase"/>
</dbReference>
<dbReference type="NCBIfam" id="TIGR01189">
    <property type="entry name" value="ccmA"/>
    <property type="match status" value="1"/>
</dbReference>
<dbReference type="NCBIfam" id="NF010061">
    <property type="entry name" value="PRK13538.1"/>
    <property type="match status" value="1"/>
</dbReference>
<dbReference type="PANTHER" id="PTHR43499">
    <property type="entry name" value="ABC TRANSPORTER I FAMILY MEMBER 1"/>
    <property type="match status" value="1"/>
</dbReference>
<dbReference type="PANTHER" id="PTHR43499:SF1">
    <property type="entry name" value="ABC TRANSPORTER I FAMILY MEMBER 1"/>
    <property type="match status" value="1"/>
</dbReference>
<dbReference type="Pfam" id="PF00005">
    <property type="entry name" value="ABC_tran"/>
    <property type="match status" value="1"/>
</dbReference>
<dbReference type="SMART" id="SM00382">
    <property type="entry name" value="AAA"/>
    <property type="match status" value="1"/>
</dbReference>
<dbReference type="SUPFAM" id="SSF52540">
    <property type="entry name" value="P-loop containing nucleoside triphosphate hydrolases"/>
    <property type="match status" value="1"/>
</dbReference>
<dbReference type="PROSITE" id="PS00211">
    <property type="entry name" value="ABC_TRANSPORTER_1"/>
    <property type="match status" value="1"/>
</dbReference>
<dbReference type="PROSITE" id="PS50893">
    <property type="entry name" value="ABC_TRANSPORTER_2"/>
    <property type="match status" value="1"/>
</dbReference>
<dbReference type="PROSITE" id="PS51243">
    <property type="entry name" value="CCMA"/>
    <property type="match status" value="1"/>
</dbReference>
<name>CCMA_ALKEH</name>